<gene>
    <name evidence="1" type="primary">gatA</name>
    <name type="ordered locus">LIC_11461</name>
</gene>
<feature type="chain" id="PRO_0000105171" description="Glutamyl-tRNA(Gln) amidotransferase subunit A">
    <location>
        <begin position="1"/>
        <end position="487"/>
    </location>
</feature>
<feature type="active site" description="Charge relay system" evidence="1">
    <location>
        <position position="80"/>
    </location>
</feature>
<feature type="active site" description="Charge relay system" evidence="1">
    <location>
        <position position="155"/>
    </location>
</feature>
<feature type="active site" description="Acyl-ester intermediate" evidence="1">
    <location>
        <position position="179"/>
    </location>
</feature>
<organism>
    <name type="scientific">Leptospira interrogans serogroup Icterohaemorrhagiae serovar copenhageni (strain Fiocruz L1-130)</name>
    <dbReference type="NCBI Taxonomy" id="267671"/>
    <lineage>
        <taxon>Bacteria</taxon>
        <taxon>Pseudomonadati</taxon>
        <taxon>Spirochaetota</taxon>
        <taxon>Spirochaetia</taxon>
        <taxon>Leptospirales</taxon>
        <taxon>Leptospiraceae</taxon>
        <taxon>Leptospira</taxon>
    </lineage>
</organism>
<proteinExistence type="inferred from homology"/>
<comment type="function">
    <text evidence="1">Allows the formation of correctly charged Gln-tRNA(Gln) through the transamidation of misacylated Glu-tRNA(Gln) in organisms which lack glutaminyl-tRNA synthetase. The reaction takes place in the presence of glutamine and ATP through an activated gamma-phospho-Glu-tRNA(Gln).</text>
</comment>
<comment type="catalytic activity">
    <reaction evidence="1">
        <text>L-glutamyl-tRNA(Gln) + L-glutamine + ATP + H2O = L-glutaminyl-tRNA(Gln) + L-glutamate + ADP + phosphate + H(+)</text>
        <dbReference type="Rhea" id="RHEA:17521"/>
        <dbReference type="Rhea" id="RHEA-COMP:9681"/>
        <dbReference type="Rhea" id="RHEA-COMP:9684"/>
        <dbReference type="ChEBI" id="CHEBI:15377"/>
        <dbReference type="ChEBI" id="CHEBI:15378"/>
        <dbReference type="ChEBI" id="CHEBI:29985"/>
        <dbReference type="ChEBI" id="CHEBI:30616"/>
        <dbReference type="ChEBI" id="CHEBI:43474"/>
        <dbReference type="ChEBI" id="CHEBI:58359"/>
        <dbReference type="ChEBI" id="CHEBI:78520"/>
        <dbReference type="ChEBI" id="CHEBI:78521"/>
        <dbReference type="ChEBI" id="CHEBI:456216"/>
        <dbReference type="EC" id="6.3.5.7"/>
    </reaction>
</comment>
<comment type="subunit">
    <text evidence="1">Heterotrimer of A, B and C subunits.</text>
</comment>
<comment type="similarity">
    <text evidence="1">Belongs to the amidase family. GatA subfamily.</text>
</comment>
<name>GATA_LEPIC</name>
<evidence type="ECO:0000255" key="1">
    <source>
        <dbReference type="HAMAP-Rule" id="MF_00120"/>
    </source>
</evidence>
<reference key="1">
    <citation type="journal article" date="2004" name="J. Bacteriol.">
        <title>Comparative genomics of two Leptospira interrogans serovars reveals novel insights into physiology and pathogenesis.</title>
        <authorList>
            <person name="Nascimento A.L.T.O."/>
            <person name="Ko A.I."/>
            <person name="Martins E.A.L."/>
            <person name="Monteiro-Vitorello C.B."/>
            <person name="Ho P.L."/>
            <person name="Haake D.A."/>
            <person name="Verjovski-Almeida S."/>
            <person name="Hartskeerl R.A."/>
            <person name="Marques M.V."/>
            <person name="Oliveira M.C."/>
            <person name="Menck C.F.M."/>
            <person name="Leite L.C.C."/>
            <person name="Carrer H."/>
            <person name="Coutinho L.L."/>
            <person name="Degrave W.M."/>
            <person name="Dellagostin O.A."/>
            <person name="El-Dorry H."/>
            <person name="Ferro E.S."/>
            <person name="Ferro M.I.T."/>
            <person name="Furlan L.R."/>
            <person name="Gamberini M."/>
            <person name="Giglioti E.A."/>
            <person name="Goes-Neto A."/>
            <person name="Goldman G.H."/>
            <person name="Goldman M.H.S."/>
            <person name="Harakava R."/>
            <person name="Jeronimo S.M.B."/>
            <person name="Junqueira-de-Azevedo I.L.M."/>
            <person name="Kimura E.T."/>
            <person name="Kuramae E.E."/>
            <person name="Lemos E.G.M."/>
            <person name="Lemos M.V.F."/>
            <person name="Marino C.L."/>
            <person name="Nunes L.R."/>
            <person name="de Oliveira R.C."/>
            <person name="Pereira G.G."/>
            <person name="Reis M.S."/>
            <person name="Schriefer A."/>
            <person name="Siqueira W.J."/>
            <person name="Sommer P."/>
            <person name="Tsai S.M."/>
            <person name="Simpson A.J.G."/>
            <person name="Ferro J.A."/>
            <person name="Camargo L.E.A."/>
            <person name="Kitajima J.P."/>
            <person name="Setubal J.C."/>
            <person name="Van Sluys M.A."/>
        </authorList>
    </citation>
    <scope>NUCLEOTIDE SEQUENCE [LARGE SCALE GENOMIC DNA]</scope>
    <source>
        <strain>Fiocruz L1-130</strain>
    </source>
</reference>
<accession>Q72SC3</accession>
<sequence length="487" mass="53286">MNEILKKPYVELKDSLNSGKISSTELVSACINRIREVDGAVKAFLYLDEKKVLNSAEESDKRRKEGKPLSEFDGMPVAIKDNICIRDTITSCSSKILENYKSPFHATVVEKLLEKGFILFPRTNMDEFAMGSSTENSAFQTTRNPFDLERIPGGSSGGSAAAVAASMVPLALGSDTGGSVRQPASLCGLYGLKPTYGTVSRYGLVAYASSLDQIGPFSRELQGCIDLYSVISGKDVRDSTSIHRPKFSASDVQPQDFKGLKVGVIKMTPEIQSEVVKSYDKVLNQLKEKGATLVDIDFSKFGFAIPIYYIIATAECSSNLSRFDGIRFGSRKDKTGKLEDLFVDSRTEGFGPEVKRRILLGTFSLSAGYYDAYYGTAQKARALIRKEYESFFSKVDCILQPTSPTTAFKIGEKTKDPIQMYKADIWTTSVNLAGLPAMSVPMGADQKGLPIGLQITTPHFQEGKLFGIALALSTLEGMNIQFPESIK</sequence>
<keyword id="KW-0067">ATP-binding</keyword>
<keyword id="KW-0436">Ligase</keyword>
<keyword id="KW-0547">Nucleotide-binding</keyword>
<keyword id="KW-0648">Protein biosynthesis</keyword>
<dbReference type="EC" id="6.3.5.7" evidence="1"/>
<dbReference type="EMBL" id="AE016823">
    <property type="protein sequence ID" value="AAS70059.1"/>
    <property type="molecule type" value="Genomic_DNA"/>
</dbReference>
<dbReference type="RefSeq" id="WP_001002770.1">
    <property type="nucleotide sequence ID" value="NC_005823.1"/>
</dbReference>
<dbReference type="SMR" id="Q72SC3"/>
<dbReference type="GeneID" id="61144762"/>
<dbReference type="KEGG" id="lic:LIC_11461"/>
<dbReference type="HOGENOM" id="CLU_009600_0_3_12"/>
<dbReference type="Proteomes" id="UP000007037">
    <property type="component" value="Chromosome I"/>
</dbReference>
<dbReference type="GO" id="GO:0030956">
    <property type="term" value="C:glutamyl-tRNA(Gln) amidotransferase complex"/>
    <property type="evidence" value="ECO:0007669"/>
    <property type="project" value="InterPro"/>
</dbReference>
<dbReference type="GO" id="GO:0005524">
    <property type="term" value="F:ATP binding"/>
    <property type="evidence" value="ECO:0007669"/>
    <property type="project" value="UniProtKB-KW"/>
</dbReference>
<dbReference type="GO" id="GO:0050567">
    <property type="term" value="F:glutaminyl-tRNA synthase (glutamine-hydrolyzing) activity"/>
    <property type="evidence" value="ECO:0007669"/>
    <property type="project" value="UniProtKB-UniRule"/>
</dbReference>
<dbReference type="GO" id="GO:0006412">
    <property type="term" value="P:translation"/>
    <property type="evidence" value="ECO:0007669"/>
    <property type="project" value="UniProtKB-UniRule"/>
</dbReference>
<dbReference type="Gene3D" id="3.90.1300.10">
    <property type="entry name" value="Amidase signature (AS) domain"/>
    <property type="match status" value="1"/>
</dbReference>
<dbReference type="HAMAP" id="MF_00120">
    <property type="entry name" value="GatA"/>
    <property type="match status" value="1"/>
</dbReference>
<dbReference type="InterPro" id="IPR000120">
    <property type="entry name" value="Amidase"/>
</dbReference>
<dbReference type="InterPro" id="IPR020556">
    <property type="entry name" value="Amidase_CS"/>
</dbReference>
<dbReference type="InterPro" id="IPR023631">
    <property type="entry name" value="Amidase_dom"/>
</dbReference>
<dbReference type="InterPro" id="IPR036928">
    <property type="entry name" value="AS_sf"/>
</dbReference>
<dbReference type="InterPro" id="IPR004412">
    <property type="entry name" value="GatA"/>
</dbReference>
<dbReference type="NCBIfam" id="TIGR00132">
    <property type="entry name" value="gatA"/>
    <property type="match status" value="1"/>
</dbReference>
<dbReference type="PANTHER" id="PTHR11895:SF151">
    <property type="entry name" value="GLUTAMYL-TRNA(GLN) AMIDOTRANSFERASE SUBUNIT A"/>
    <property type="match status" value="1"/>
</dbReference>
<dbReference type="PANTHER" id="PTHR11895">
    <property type="entry name" value="TRANSAMIDASE"/>
    <property type="match status" value="1"/>
</dbReference>
<dbReference type="Pfam" id="PF01425">
    <property type="entry name" value="Amidase"/>
    <property type="match status" value="1"/>
</dbReference>
<dbReference type="SUPFAM" id="SSF75304">
    <property type="entry name" value="Amidase signature (AS) enzymes"/>
    <property type="match status" value="1"/>
</dbReference>
<dbReference type="PROSITE" id="PS00571">
    <property type="entry name" value="AMIDASES"/>
    <property type="match status" value="1"/>
</dbReference>
<protein>
    <recommendedName>
        <fullName evidence="1">Glutamyl-tRNA(Gln) amidotransferase subunit A</fullName>
        <shortName evidence="1">Glu-ADT subunit A</shortName>
        <ecNumber evidence="1">6.3.5.7</ecNumber>
    </recommendedName>
</protein>